<name>EFG_STAIN</name>
<accession>Q5U8S9</accession>
<evidence type="ECO:0000250" key="1"/>
<evidence type="ECO:0000255" key="2">
    <source>
        <dbReference type="HAMAP-Rule" id="MF_00054"/>
    </source>
</evidence>
<proteinExistence type="inferred from homology"/>
<feature type="initiator methionine" description="Removed" evidence="1">
    <location>
        <position position="1"/>
    </location>
</feature>
<feature type="chain" id="PRO_0000091223" description="Elongation factor G">
    <location>
        <begin position="2"/>
        <end position="693"/>
    </location>
</feature>
<feature type="domain" description="tr-type G">
    <location>
        <begin position="8"/>
        <end position="282"/>
    </location>
</feature>
<feature type="binding site" evidence="2">
    <location>
        <begin position="17"/>
        <end position="24"/>
    </location>
    <ligand>
        <name>GTP</name>
        <dbReference type="ChEBI" id="CHEBI:37565"/>
    </ligand>
</feature>
<feature type="binding site" evidence="2">
    <location>
        <begin position="81"/>
        <end position="85"/>
    </location>
    <ligand>
        <name>GTP</name>
        <dbReference type="ChEBI" id="CHEBI:37565"/>
    </ligand>
</feature>
<feature type="binding site" evidence="2">
    <location>
        <begin position="135"/>
        <end position="138"/>
    </location>
    <ligand>
        <name>GTP</name>
        <dbReference type="ChEBI" id="CHEBI:37565"/>
    </ligand>
</feature>
<organism>
    <name type="scientific">Staphylococcus intermedius</name>
    <dbReference type="NCBI Taxonomy" id="1285"/>
    <lineage>
        <taxon>Bacteria</taxon>
        <taxon>Bacillati</taxon>
        <taxon>Bacillota</taxon>
        <taxon>Bacilli</taxon>
        <taxon>Bacillales</taxon>
        <taxon>Staphylococcaceae</taxon>
        <taxon>Staphylococcus</taxon>
        <taxon>Staphylococcus intermedius group</taxon>
    </lineage>
</organism>
<sequence length="693" mass="76731">MGRDFSLKNTRNIGIMAHIDAGKTTTTERILYYTGRIHKIGETHEGASQMDWMEQEQDRGITITSAATTAEWKNHRVNIIDTPGHVDFTVEVERSLRVLDGAVTVLDAQSGVEPQTETVWRQATTYGVPRIVFVNKMDKIGANFDYAVSTLHDRLQANAAPIQLPIGAEDEFSAIIDLVTMKCFKYNNDLGTEIEEVEIPEDYRERAEEAREALIEAVAETNESLMEKIFDEQEITVDELKDAIRQATTDVEFYPVLCGTAFKNKGVQLMLDAVIDYLPSPLDVKPIVGHRADNPDEEVIAKADDDAEFAALAFKVMTDPYVGKLTFFRVYSGTLTSGSYVKNSTKGKRERVGRILQMHANSREEISSVYSGDIAAAVGLKDTGTGDTLCGEKNDIILESMEFPEPVIHLSVEPKSKADQDKMTQALVKLQEEDPTFKAHTDEETGQVIIGGMGELHLDIIVDRMKKEFNVEANVGAPMVSYRETFKTSAAVQGKFSRQSGGRGQYGDVHIEFTPNETGAGFEFENAIVGGVVPREYIPSVEQGLKDAMENGVLAGYPLIDVKAKLFDGSYHDVDSSEMAFKIAASLALKEAAKKCDPVILEPMMKVTIEMPEEYMGDIMGDVTARRGRVDGMEPRGNAQVVNAYVPLSEMFGYATSLRSNTQGRGTYTMYFDHYAEVPKSISEEIIKKNKGE</sequence>
<protein>
    <recommendedName>
        <fullName evidence="2">Elongation factor G</fullName>
        <shortName evidence="2">EF-G</shortName>
    </recommendedName>
</protein>
<keyword id="KW-0963">Cytoplasm</keyword>
<keyword id="KW-0251">Elongation factor</keyword>
<keyword id="KW-0342">GTP-binding</keyword>
<keyword id="KW-0547">Nucleotide-binding</keyword>
<keyword id="KW-0648">Protein biosynthesis</keyword>
<dbReference type="EMBL" id="AY776250">
    <property type="protein sequence ID" value="AAV39278.1"/>
    <property type="molecule type" value="Genomic_DNA"/>
</dbReference>
<dbReference type="RefSeq" id="WP_019169061.1">
    <property type="nucleotide sequence ID" value="NZ_MWUY01000001.1"/>
</dbReference>
<dbReference type="SMR" id="Q5U8S9"/>
<dbReference type="eggNOG" id="COG0480">
    <property type="taxonomic scope" value="Bacteria"/>
</dbReference>
<dbReference type="GO" id="GO:0005737">
    <property type="term" value="C:cytoplasm"/>
    <property type="evidence" value="ECO:0007669"/>
    <property type="project" value="UniProtKB-SubCell"/>
</dbReference>
<dbReference type="GO" id="GO:0005525">
    <property type="term" value="F:GTP binding"/>
    <property type="evidence" value="ECO:0007669"/>
    <property type="project" value="UniProtKB-UniRule"/>
</dbReference>
<dbReference type="GO" id="GO:0003924">
    <property type="term" value="F:GTPase activity"/>
    <property type="evidence" value="ECO:0007669"/>
    <property type="project" value="InterPro"/>
</dbReference>
<dbReference type="GO" id="GO:0003746">
    <property type="term" value="F:translation elongation factor activity"/>
    <property type="evidence" value="ECO:0007669"/>
    <property type="project" value="UniProtKB-UniRule"/>
</dbReference>
<dbReference type="GO" id="GO:0032790">
    <property type="term" value="P:ribosome disassembly"/>
    <property type="evidence" value="ECO:0007669"/>
    <property type="project" value="TreeGrafter"/>
</dbReference>
<dbReference type="CDD" id="cd01886">
    <property type="entry name" value="EF-G"/>
    <property type="match status" value="1"/>
</dbReference>
<dbReference type="CDD" id="cd16262">
    <property type="entry name" value="EFG_III"/>
    <property type="match status" value="1"/>
</dbReference>
<dbReference type="CDD" id="cd01434">
    <property type="entry name" value="EFG_mtEFG1_IV"/>
    <property type="match status" value="1"/>
</dbReference>
<dbReference type="CDD" id="cd03713">
    <property type="entry name" value="EFG_mtEFG_C"/>
    <property type="match status" value="1"/>
</dbReference>
<dbReference type="CDD" id="cd04088">
    <property type="entry name" value="EFG_mtEFG_II"/>
    <property type="match status" value="1"/>
</dbReference>
<dbReference type="FunFam" id="2.40.30.10:FF:000006">
    <property type="entry name" value="Elongation factor G"/>
    <property type="match status" value="1"/>
</dbReference>
<dbReference type="FunFam" id="3.30.230.10:FF:000003">
    <property type="entry name" value="Elongation factor G"/>
    <property type="match status" value="1"/>
</dbReference>
<dbReference type="FunFam" id="3.30.70.240:FF:000001">
    <property type="entry name" value="Elongation factor G"/>
    <property type="match status" value="1"/>
</dbReference>
<dbReference type="FunFam" id="3.30.70.870:FF:000001">
    <property type="entry name" value="Elongation factor G"/>
    <property type="match status" value="1"/>
</dbReference>
<dbReference type="FunFam" id="3.40.50.300:FF:000029">
    <property type="entry name" value="Elongation factor G"/>
    <property type="match status" value="1"/>
</dbReference>
<dbReference type="Gene3D" id="3.30.230.10">
    <property type="match status" value="1"/>
</dbReference>
<dbReference type="Gene3D" id="3.30.70.240">
    <property type="match status" value="1"/>
</dbReference>
<dbReference type="Gene3D" id="3.30.70.870">
    <property type="entry name" value="Elongation Factor G (Translational Gtpase), domain 3"/>
    <property type="match status" value="1"/>
</dbReference>
<dbReference type="Gene3D" id="3.40.50.300">
    <property type="entry name" value="P-loop containing nucleotide triphosphate hydrolases"/>
    <property type="match status" value="1"/>
</dbReference>
<dbReference type="Gene3D" id="2.40.30.10">
    <property type="entry name" value="Translation factors"/>
    <property type="match status" value="1"/>
</dbReference>
<dbReference type="HAMAP" id="MF_00054_B">
    <property type="entry name" value="EF_G_EF_2_B"/>
    <property type="match status" value="1"/>
</dbReference>
<dbReference type="InterPro" id="IPR041095">
    <property type="entry name" value="EFG_II"/>
</dbReference>
<dbReference type="InterPro" id="IPR009022">
    <property type="entry name" value="EFG_III"/>
</dbReference>
<dbReference type="InterPro" id="IPR035647">
    <property type="entry name" value="EFG_III/V"/>
</dbReference>
<dbReference type="InterPro" id="IPR047872">
    <property type="entry name" value="EFG_IV"/>
</dbReference>
<dbReference type="InterPro" id="IPR035649">
    <property type="entry name" value="EFG_V"/>
</dbReference>
<dbReference type="InterPro" id="IPR000640">
    <property type="entry name" value="EFG_V-like"/>
</dbReference>
<dbReference type="InterPro" id="IPR004161">
    <property type="entry name" value="EFTu-like_2"/>
</dbReference>
<dbReference type="InterPro" id="IPR031157">
    <property type="entry name" value="G_TR_CS"/>
</dbReference>
<dbReference type="InterPro" id="IPR027417">
    <property type="entry name" value="P-loop_NTPase"/>
</dbReference>
<dbReference type="InterPro" id="IPR020568">
    <property type="entry name" value="Ribosomal_Su5_D2-typ_SF"/>
</dbReference>
<dbReference type="InterPro" id="IPR014721">
    <property type="entry name" value="Ribsml_uS5_D2-typ_fold_subgr"/>
</dbReference>
<dbReference type="InterPro" id="IPR005225">
    <property type="entry name" value="Small_GTP-bd"/>
</dbReference>
<dbReference type="InterPro" id="IPR000795">
    <property type="entry name" value="T_Tr_GTP-bd_dom"/>
</dbReference>
<dbReference type="InterPro" id="IPR009000">
    <property type="entry name" value="Transl_B-barrel_sf"/>
</dbReference>
<dbReference type="InterPro" id="IPR004540">
    <property type="entry name" value="Transl_elong_EFG/EF2"/>
</dbReference>
<dbReference type="InterPro" id="IPR005517">
    <property type="entry name" value="Transl_elong_EFG/EF2_IV"/>
</dbReference>
<dbReference type="NCBIfam" id="TIGR00484">
    <property type="entry name" value="EF-G"/>
    <property type="match status" value="1"/>
</dbReference>
<dbReference type="NCBIfam" id="NF009379">
    <property type="entry name" value="PRK12740.1-3"/>
    <property type="match status" value="1"/>
</dbReference>
<dbReference type="NCBIfam" id="NF009381">
    <property type="entry name" value="PRK12740.1-5"/>
    <property type="match status" value="1"/>
</dbReference>
<dbReference type="NCBIfam" id="TIGR00231">
    <property type="entry name" value="small_GTP"/>
    <property type="match status" value="1"/>
</dbReference>
<dbReference type="PANTHER" id="PTHR43261:SF1">
    <property type="entry name" value="RIBOSOME-RELEASING FACTOR 2, MITOCHONDRIAL"/>
    <property type="match status" value="1"/>
</dbReference>
<dbReference type="PANTHER" id="PTHR43261">
    <property type="entry name" value="TRANSLATION ELONGATION FACTOR G-RELATED"/>
    <property type="match status" value="1"/>
</dbReference>
<dbReference type="Pfam" id="PF00679">
    <property type="entry name" value="EFG_C"/>
    <property type="match status" value="1"/>
</dbReference>
<dbReference type="Pfam" id="PF14492">
    <property type="entry name" value="EFG_III"/>
    <property type="match status" value="1"/>
</dbReference>
<dbReference type="Pfam" id="PF03764">
    <property type="entry name" value="EFG_IV"/>
    <property type="match status" value="1"/>
</dbReference>
<dbReference type="Pfam" id="PF00009">
    <property type="entry name" value="GTP_EFTU"/>
    <property type="match status" value="1"/>
</dbReference>
<dbReference type="Pfam" id="PF03144">
    <property type="entry name" value="GTP_EFTU_D2"/>
    <property type="match status" value="1"/>
</dbReference>
<dbReference type="PRINTS" id="PR00315">
    <property type="entry name" value="ELONGATNFCT"/>
</dbReference>
<dbReference type="SMART" id="SM00838">
    <property type="entry name" value="EFG_C"/>
    <property type="match status" value="1"/>
</dbReference>
<dbReference type="SMART" id="SM00889">
    <property type="entry name" value="EFG_IV"/>
    <property type="match status" value="1"/>
</dbReference>
<dbReference type="SUPFAM" id="SSF54980">
    <property type="entry name" value="EF-G C-terminal domain-like"/>
    <property type="match status" value="2"/>
</dbReference>
<dbReference type="SUPFAM" id="SSF52540">
    <property type="entry name" value="P-loop containing nucleoside triphosphate hydrolases"/>
    <property type="match status" value="1"/>
</dbReference>
<dbReference type="SUPFAM" id="SSF54211">
    <property type="entry name" value="Ribosomal protein S5 domain 2-like"/>
    <property type="match status" value="1"/>
</dbReference>
<dbReference type="SUPFAM" id="SSF50447">
    <property type="entry name" value="Translation proteins"/>
    <property type="match status" value="1"/>
</dbReference>
<dbReference type="PROSITE" id="PS00301">
    <property type="entry name" value="G_TR_1"/>
    <property type="match status" value="1"/>
</dbReference>
<dbReference type="PROSITE" id="PS51722">
    <property type="entry name" value="G_TR_2"/>
    <property type="match status" value="1"/>
</dbReference>
<reference key="1">
    <citation type="journal article" date="2007" name="Antimicrob. Agents Chemother.">
        <title>Genetic basis of resistance to fusidic acid in staphylococci.</title>
        <authorList>
            <person name="O'Neill A.J."/>
            <person name="McLaws F."/>
            <person name="Kahlmeter G."/>
            <person name="Henriksen A.S."/>
            <person name="Chopra I."/>
        </authorList>
    </citation>
    <scope>NUCLEOTIDE SEQUENCE [GENOMIC DNA]</scope>
    <source>
        <strain>ATCC 29663 / DSM 20373 / NCTC 11048 / H11</strain>
    </source>
</reference>
<comment type="function">
    <text evidence="2">Catalyzes the GTP-dependent ribosomal translocation step during translation elongation. During this step, the ribosome changes from the pre-translocational (PRE) to the post-translocational (POST) state as the newly formed A-site-bound peptidyl-tRNA and P-site-bound deacylated tRNA move to the P and E sites, respectively. Catalyzes the coordinated movement of the two tRNA molecules, the mRNA and conformational changes in the ribosome.</text>
</comment>
<comment type="subcellular location">
    <subcellularLocation>
        <location evidence="2">Cytoplasm</location>
    </subcellularLocation>
</comment>
<comment type="similarity">
    <text evidence="2">Belongs to the TRAFAC class translation factor GTPase superfamily. Classic translation factor GTPase family. EF-G/EF-2 subfamily.</text>
</comment>
<gene>
    <name evidence="2" type="primary">fusA</name>
</gene>